<gene>
    <name evidence="1" type="primary">rpsH</name>
    <name type="ordered locus">BG0504</name>
</gene>
<proteinExistence type="inferred from homology"/>
<organism>
    <name type="scientific">Borrelia garinii subsp. bavariensis (strain ATCC BAA-2496 / DSM 23469 / PBi)</name>
    <name type="common">Borreliella bavariensis</name>
    <dbReference type="NCBI Taxonomy" id="290434"/>
    <lineage>
        <taxon>Bacteria</taxon>
        <taxon>Pseudomonadati</taxon>
        <taxon>Spirochaetota</taxon>
        <taxon>Spirochaetia</taxon>
        <taxon>Spirochaetales</taxon>
        <taxon>Borreliaceae</taxon>
        <taxon>Borreliella</taxon>
    </lineage>
</organism>
<accession>Q661C8</accession>
<name>RS8_BORGP</name>
<feature type="chain" id="PRO_0000126374" description="Small ribosomal subunit protein uS8">
    <location>
        <begin position="1"/>
        <end position="132"/>
    </location>
</feature>
<dbReference type="EMBL" id="CP000013">
    <property type="protein sequence ID" value="AAU07343.1"/>
    <property type="molecule type" value="Genomic_DNA"/>
</dbReference>
<dbReference type="RefSeq" id="WP_011193810.1">
    <property type="nucleotide sequence ID" value="NZ_CP028872.1"/>
</dbReference>
<dbReference type="SMR" id="Q661C8"/>
<dbReference type="GeneID" id="45161286"/>
<dbReference type="KEGG" id="bga:BG0504"/>
<dbReference type="eggNOG" id="COG0096">
    <property type="taxonomic scope" value="Bacteria"/>
</dbReference>
<dbReference type="HOGENOM" id="CLU_098428_0_2_12"/>
<dbReference type="OrthoDB" id="9802617at2"/>
<dbReference type="Proteomes" id="UP000002276">
    <property type="component" value="Chromosome"/>
</dbReference>
<dbReference type="GO" id="GO:1990904">
    <property type="term" value="C:ribonucleoprotein complex"/>
    <property type="evidence" value="ECO:0007669"/>
    <property type="project" value="UniProtKB-KW"/>
</dbReference>
<dbReference type="GO" id="GO:0005840">
    <property type="term" value="C:ribosome"/>
    <property type="evidence" value="ECO:0007669"/>
    <property type="project" value="UniProtKB-KW"/>
</dbReference>
<dbReference type="GO" id="GO:0019843">
    <property type="term" value="F:rRNA binding"/>
    <property type="evidence" value="ECO:0007669"/>
    <property type="project" value="UniProtKB-UniRule"/>
</dbReference>
<dbReference type="GO" id="GO:0003735">
    <property type="term" value="F:structural constituent of ribosome"/>
    <property type="evidence" value="ECO:0007669"/>
    <property type="project" value="InterPro"/>
</dbReference>
<dbReference type="GO" id="GO:0006412">
    <property type="term" value="P:translation"/>
    <property type="evidence" value="ECO:0007669"/>
    <property type="project" value="UniProtKB-UniRule"/>
</dbReference>
<dbReference type="FunFam" id="3.30.1370.30:FF:000002">
    <property type="entry name" value="30S ribosomal protein S8"/>
    <property type="match status" value="1"/>
</dbReference>
<dbReference type="FunFam" id="3.30.1490.10:FF:000001">
    <property type="entry name" value="30S ribosomal protein S8"/>
    <property type="match status" value="1"/>
</dbReference>
<dbReference type="Gene3D" id="3.30.1370.30">
    <property type="match status" value="1"/>
</dbReference>
<dbReference type="Gene3D" id="3.30.1490.10">
    <property type="match status" value="1"/>
</dbReference>
<dbReference type="HAMAP" id="MF_01302_B">
    <property type="entry name" value="Ribosomal_uS8_B"/>
    <property type="match status" value="1"/>
</dbReference>
<dbReference type="InterPro" id="IPR000630">
    <property type="entry name" value="Ribosomal_uS8"/>
</dbReference>
<dbReference type="InterPro" id="IPR047863">
    <property type="entry name" value="Ribosomal_uS8_CS"/>
</dbReference>
<dbReference type="InterPro" id="IPR035987">
    <property type="entry name" value="Ribosomal_uS8_sf"/>
</dbReference>
<dbReference type="NCBIfam" id="NF001109">
    <property type="entry name" value="PRK00136.1"/>
    <property type="match status" value="1"/>
</dbReference>
<dbReference type="PANTHER" id="PTHR11758">
    <property type="entry name" value="40S RIBOSOMAL PROTEIN S15A"/>
    <property type="match status" value="1"/>
</dbReference>
<dbReference type="Pfam" id="PF00410">
    <property type="entry name" value="Ribosomal_S8"/>
    <property type="match status" value="1"/>
</dbReference>
<dbReference type="SUPFAM" id="SSF56047">
    <property type="entry name" value="Ribosomal protein S8"/>
    <property type="match status" value="1"/>
</dbReference>
<dbReference type="PROSITE" id="PS00053">
    <property type="entry name" value="RIBOSOMAL_S8"/>
    <property type="match status" value="1"/>
</dbReference>
<comment type="function">
    <text evidence="1">One of the primary rRNA binding proteins, it binds directly to 16S rRNA central domain where it helps coordinate assembly of the platform of the 30S subunit.</text>
</comment>
<comment type="subunit">
    <text evidence="1">Part of the 30S ribosomal subunit. Contacts proteins S5 and S12.</text>
</comment>
<comment type="similarity">
    <text evidence="1">Belongs to the universal ribosomal protein uS8 family.</text>
</comment>
<protein>
    <recommendedName>
        <fullName evidence="1">Small ribosomal subunit protein uS8</fullName>
    </recommendedName>
    <alternativeName>
        <fullName evidence="2">30S ribosomal protein S8</fullName>
    </alternativeName>
</protein>
<evidence type="ECO:0000255" key="1">
    <source>
        <dbReference type="HAMAP-Rule" id="MF_01302"/>
    </source>
</evidence>
<evidence type="ECO:0000305" key="2"/>
<keyword id="KW-0687">Ribonucleoprotein</keyword>
<keyword id="KW-0689">Ribosomal protein</keyword>
<keyword id="KW-0694">RNA-binding</keyword>
<keyword id="KW-0699">rRNA-binding</keyword>
<sequence>MAITYSVGDMLTKLRNASRVKHGSVDLKMSNMNKSILNILKEEGYIKDFNFLEKEGIAFIKVLLKYDNKRNPVINKIDAISTPGRKIYSSYKNMPRIKNGYGILIISSSKGVITGKEAKNKKIGGELICSVW</sequence>
<reference key="1">
    <citation type="journal article" date="2004" name="Nucleic Acids Res.">
        <title>Comparative analysis of the Borrelia garinii genome.</title>
        <authorList>
            <person name="Gloeckner G."/>
            <person name="Lehmann R."/>
            <person name="Romualdi A."/>
            <person name="Pradella S."/>
            <person name="Schulte-Spechtel U."/>
            <person name="Schilhabel M."/>
            <person name="Wilske B."/>
            <person name="Suehnel J."/>
            <person name="Platzer M."/>
        </authorList>
    </citation>
    <scope>NUCLEOTIDE SEQUENCE [LARGE SCALE GENOMIC DNA]</scope>
    <source>
        <strain>ATCC BAA-2496 / DSM 23469 / PBi</strain>
    </source>
</reference>